<proteinExistence type="inferred from homology"/>
<feature type="signal peptide" evidence="2">
    <location>
        <begin position="1" status="less than"/>
        <end position="3"/>
    </location>
</feature>
<feature type="propeptide" id="PRO_0000346715" evidence="1">
    <location>
        <begin position="4"/>
        <end position="115"/>
    </location>
</feature>
<feature type="chain" id="PRO_0000346716" description="Neurotrophin-3">
    <location>
        <begin position="116"/>
        <end position="159" status="greater than"/>
    </location>
</feature>
<feature type="region of interest" description="Disordered" evidence="3">
    <location>
        <begin position="91"/>
        <end position="129"/>
    </location>
</feature>
<feature type="compositionally biased region" description="Basic residues" evidence="3">
    <location>
        <begin position="110"/>
        <end position="121"/>
    </location>
</feature>
<feature type="glycosylation site" description="N-linked (GlcNAc...) asparagine" evidence="2">
    <location>
        <position position="108"/>
    </location>
</feature>
<feature type="non-terminal residue">
    <location>
        <position position="1"/>
    </location>
</feature>
<feature type="non-terminal residue">
    <location>
        <position position="159"/>
    </location>
</feature>
<protein>
    <recommendedName>
        <fullName>Neurotrophin-3</fullName>
        <shortName>NT-3</shortName>
    </recommendedName>
</protein>
<accession>Q1X6Z0</accession>
<sequence length="159" mass="17940">IQSTSMDQGILTEDSMNSFIRTLIQAGIWKNKLPKQTARTKDGMQTTVKRTEAEADAMASKGFQPIVSVDAELLRQQRRFSSPRVLLSENAPLEPPPLYLTEEPLVQNRTSRRKREGKRHRGEYSVCDSESRWVTDKSSAVDIRGHQVTVLGEIRMGPS</sequence>
<reference key="1">
    <citation type="journal article" date="2006" name="Mol. Phylogenet. Evol.">
        <title>Dispersal and vicariance: the complex evolutionary history of boid snakes.</title>
        <authorList>
            <person name="Noonan B.P."/>
            <person name="Chippindale P.T."/>
        </authorList>
    </citation>
    <scope>NUCLEOTIDE SEQUENCE [GENOMIC DNA]</scope>
</reference>
<comment type="function">
    <text evidence="1">Seems to promote the survival of visceral and proprioceptive sensory neurons.</text>
</comment>
<comment type="subcellular location">
    <subcellularLocation>
        <location evidence="1">Secreted</location>
    </subcellularLocation>
</comment>
<comment type="similarity">
    <text evidence="4">Belongs to the NGF-beta family.</text>
</comment>
<gene>
    <name type="primary">NTF3</name>
</gene>
<organism>
    <name type="scientific">Candoia carinata</name>
    <name type="common">Papuan tree boa</name>
    <dbReference type="NCBI Taxonomy" id="51854"/>
    <lineage>
        <taxon>Eukaryota</taxon>
        <taxon>Metazoa</taxon>
        <taxon>Chordata</taxon>
        <taxon>Craniata</taxon>
        <taxon>Vertebrata</taxon>
        <taxon>Euteleostomi</taxon>
        <taxon>Lepidosauria</taxon>
        <taxon>Squamata</taxon>
        <taxon>Bifurcata</taxon>
        <taxon>Unidentata</taxon>
        <taxon>Episquamata</taxon>
        <taxon>Toxicofera</taxon>
        <taxon>Serpentes</taxon>
        <taxon>Henophidia</taxon>
        <taxon>Boidae</taxon>
        <taxon>Boinae</taxon>
        <taxon>Candoia</taxon>
    </lineage>
</organism>
<dbReference type="EMBL" id="AY988048">
    <property type="protein sequence ID" value="AAY44255.1"/>
    <property type="molecule type" value="Genomic_DNA"/>
</dbReference>
<dbReference type="SMR" id="Q1X6Z0"/>
<dbReference type="GlyCosmos" id="Q1X6Z0">
    <property type="glycosylation" value="1 site, No reported glycans"/>
</dbReference>
<dbReference type="GO" id="GO:0030424">
    <property type="term" value="C:axon"/>
    <property type="evidence" value="ECO:0007669"/>
    <property type="project" value="TreeGrafter"/>
</dbReference>
<dbReference type="GO" id="GO:0030425">
    <property type="term" value="C:dendrite"/>
    <property type="evidence" value="ECO:0007669"/>
    <property type="project" value="TreeGrafter"/>
</dbReference>
<dbReference type="GO" id="GO:0005615">
    <property type="term" value="C:extracellular space"/>
    <property type="evidence" value="ECO:0007669"/>
    <property type="project" value="TreeGrafter"/>
</dbReference>
<dbReference type="GO" id="GO:0008021">
    <property type="term" value="C:synaptic vesicle"/>
    <property type="evidence" value="ECO:0007669"/>
    <property type="project" value="TreeGrafter"/>
</dbReference>
<dbReference type="GO" id="GO:0008083">
    <property type="term" value="F:growth factor activity"/>
    <property type="evidence" value="ECO:0007669"/>
    <property type="project" value="UniProtKB-KW"/>
</dbReference>
<dbReference type="GO" id="GO:0005163">
    <property type="term" value="F:nerve growth factor receptor binding"/>
    <property type="evidence" value="ECO:0007669"/>
    <property type="project" value="TreeGrafter"/>
</dbReference>
<dbReference type="GO" id="GO:0007169">
    <property type="term" value="P:cell surface receptor protein tyrosine kinase signaling pathway"/>
    <property type="evidence" value="ECO:0007669"/>
    <property type="project" value="TreeGrafter"/>
</dbReference>
<dbReference type="GO" id="GO:0050804">
    <property type="term" value="P:modulation of chemical synaptic transmission"/>
    <property type="evidence" value="ECO:0007669"/>
    <property type="project" value="TreeGrafter"/>
</dbReference>
<dbReference type="GO" id="GO:0043524">
    <property type="term" value="P:negative regulation of neuron apoptotic process"/>
    <property type="evidence" value="ECO:0007669"/>
    <property type="project" value="TreeGrafter"/>
</dbReference>
<dbReference type="GO" id="GO:0021675">
    <property type="term" value="P:nerve development"/>
    <property type="evidence" value="ECO:0007669"/>
    <property type="project" value="TreeGrafter"/>
</dbReference>
<dbReference type="GO" id="GO:0038180">
    <property type="term" value="P:nerve growth factor signaling pathway"/>
    <property type="evidence" value="ECO:0007669"/>
    <property type="project" value="TreeGrafter"/>
</dbReference>
<dbReference type="GO" id="GO:0048812">
    <property type="term" value="P:neuron projection morphogenesis"/>
    <property type="evidence" value="ECO:0007669"/>
    <property type="project" value="TreeGrafter"/>
</dbReference>
<dbReference type="Gene3D" id="2.10.90.10">
    <property type="entry name" value="Cystine-knot cytokines"/>
    <property type="match status" value="1"/>
</dbReference>
<dbReference type="InterPro" id="IPR029034">
    <property type="entry name" value="Cystine-knot_cytokine"/>
</dbReference>
<dbReference type="InterPro" id="IPR020408">
    <property type="entry name" value="Nerve_growth_factor-like"/>
</dbReference>
<dbReference type="InterPro" id="IPR002072">
    <property type="entry name" value="Nerve_growth_factor-rel"/>
</dbReference>
<dbReference type="InterPro" id="IPR015578">
    <property type="entry name" value="Neurotrophin-3"/>
</dbReference>
<dbReference type="InterPro" id="IPR045815">
    <property type="entry name" value="NTF3_N"/>
</dbReference>
<dbReference type="PANTHER" id="PTHR11589">
    <property type="entry name" value="NERVE GROWTH FACTOR NGF -RELATED"/>
    <property type="match status" value="1"/>
</dbReference>
<dbReference type="PANTHER" id="PTHR11589:SF4">
    <property type="entry name" value="NEUROTROPHIN-3"/>
    <property type="match status" value="1"/>
</dbReference>
<dbReference type="Pfam" id="PF00243">
    <property type="entry name" value="NGF"/>
    <property type="match status" value="1"/>
</dbReference>
<dbReference type="Pfam" id="PF19338">
    <property type="entry name" value="NTF3_N"/>
    <property type="match status" value="1"/>
</dbReference>
<dbReference type="PIRSF" id="PIRSF001789">
    <property type="entry name" value="NGF"/>
    <property type="match status" value="1"/>
</dbReference>
<dbReference type="PRINTS" id="PR01914">
    <property type="entry name" value="NEUROTROPHN3"/>
</dbReference>
<dbReference type="SMART" id="SM00140">
    <property type="entry name" value="NGF"/>
    <property type="match status" value="1"/>
</dbReference>
<dbReference type="SUPFAM" id="SSF57501">
    <property type="entry name" value="Cystine-knot cytokines"/>
    <property type="match status" value="1"/>
</dbReference>
<dbReference type="PROSITE" id="PS50270">
    <property type="entry name" value="NGF_2"/>
    <property type="match status" value="1"/>
</dbReference>
<name>NTF3_CANCA</name>
<keyword id="KW-0165">Cleavage on pair of basic residues</keyword>
<keyword id="KW-0325">Glycoprotein</keyword>
<keyword id="KW-0339">Growth factor</keyword>
<keyword id="KW-0964">Secreted</keyword>
<keyword id="KW-0732">Signal</keyword>
<evidence type="ECO:0000250" key="1"/>
<evidence type="ECO:0000255" key="2"/>
<evidence type="ECO:0000256" key="3">
    <source>
        <dbReference type="SAM" id="MobiDB-lite"/>
    </source>
</evidence>
<evidence type="ECO:0000305" key="4"/>